<sequence>MALPSSSLSSQIHTGATTQCIPHFHGSLNAGTSAGKRRSLYLRWGKDNQAKKLGPSKIVACAGQDPFSVPTLVKREFPPGFWKDHVIESLMPSYKVAPSDEKRIETLITEIKNMFRSMGYGETNPSAYDTAWVARIPAVDGSEKPQFPETLEWILQNQLKDGSWGEEFYFLAYDRILATLACIITLTIWQTGDTQVQKGIEFFKTQAGKIEEEADSHRPSGFEIVFPAMLKEAKALGLALPYELPFIQQIIEKREAKLQRLPSDLLYALPTTLLYSLEGLQEIVDWEKIMKLQSKDGSFLSSPASTAAVFMRTGNKKCLEFLNFVLKKFGNHVPCHYPLDLFERLWAVDTVERLGIDHHFKEEIKDALDYVYSHWDERGIGWARENPVPDIDDTAMGLRILRLHGYNVSSDVLKTFRDENGEFFCFLGQTQRGVTDMLNVNRCSHVAFPGETIIEEAKLCTERYLRNALEDTGAFDKWALKKNIRGEVEYALKYPWHRSMPRLEARSYIENYGPNDVWLGKTMYMMPNISNEKYLELAKLDFNRVQFFHRQELQDIRRWWNSSGFSQLGFTRERVAEIYFSPASFLFEPEFATCRAVYTKTSNFTVILDDLYDAHGTLDNLKLFSESVKRWDLSLVDQMPQDMKICFKGFYNTFNEIAEEGRKRQGRDVLSYIQKVWEVQLEAYTKEAEWSAVRYVPSYDEYIENASVSIALGTVVLISALFTGEILTDDILSKIGRDSRFLYLMGLTGRLVNDTKTYQAERGQGEVASAVQCYMKDHPEISEEEALKHVYTIMDNALDELNREFVNNRDVPDTCRRLVFETARIMQLFYMDGDGLTLSHNMEIKEHVKNCLFQPVA</sequence>
<gene>
    <name evidence="6" type="primary">TPS-LAS1</name>
</gene>
<accession>M4HY05</accession>
<organism evidence="8">
    <name type="scientific">Pinus contorta</name>
    <name type="common">Shore pine</name>
    <name type="synonym">Lodgepole pine</name>
    <dbReference type="NCBI Taxonomy" id="3339"/>
    <lineage>
        <taxon>Eukaryota</taxon>
        <taxon>Viridiplantae</taxon>
        <taxon>Streptophyta</taxon>
        <taxon>Embryophyta</taxon>
        <taxon>Tracheophyta</taxon>
        <taxon>Spermatophyta</taxon>
        <taxon>Pinopsida</taxon>
        <taxon>Pinidae</taxon>
        <taxon>Conifers I</taxon>
        <taxon>Pinales</taxon>
        <taxon>Pinaceae</taxon>
        <taxon>Pinus</taxon>
        <taxon>Pinus subgen. Pinus</taxon>
    </lineage>
</organism>
<name>TPSD1_PINCO</name>
<protein>
    <recommendedName>
        <fullName evidence="6">Bifunctional levopimaradiene synthase, chloroplastic</fullName>
        <shortName evidence="6">PcLAS1</shortName>
    </recommendedName>
    <alternativeName>
        <fullName>Diterpene synthase</fullName>
    </alternativeName>
    <domain>
        <recommendedName>
            <fullName>Levopimaradiene synthase</fullName>
            <ecNumber evidence="5">4.2.3.32</ecNumber>
        </recommendedName>
        <alternativeName>
            <fullName>Abieta-7,13-diene synthase</fullName>
            <ecNumber evidence="5">4.2.3.18</ecNumber>
        </alternativeName>
        <alternativeName>
            <fullName>Neoabietadiene synthase</fullName>
            <ecNumber evidence="5">4.2.3.132</ecNumber>
        </alternativeName>
    </domain>
    <domain>
        <recommendedName>
            <fullName>Copalyl diphosphate synthase</fullName>
            <ecNumber evidence="5">5.5.1.12</ecNumber>
        </recommendedName>
    </domain>
</protein>
<dbReference type="EC" id="4.2.3.32" evidence="5"/>
<dbReference type="EC" id="4.2.3.18" evidence="5"/>
<dbReference type="EC" id="4.2.3.132" evidence="5"/>
<dbReference type="EC" id="5.5.1.12" evidence="5"/>
<dbReference type="EMBL" id="JQ240310">
    <property type="protein sequence ID" value="AFU73862.1"/>
    <property type="molecule type" value="mRNA"/>
</dbReference>
<dbReference type="SMR" id="M4HY05"/>
<dbReference type="UniPathway" id="UPA00924"/>
<dbReference type="GO" id="GO:0009507">
    <property type="term" value="C:chloroplast"/>
    <property type="evidence" value="ECO:0007669"/>
    <property type="project" value="UniProtKB-SubCell"/>
</dbReference>
<dbReference type="GO" id="GO:0050554">
    <property type="term" value="F:abietadiene synthase activity"/>
    <property type="evidence" value="ECO:0007669"/>
    <property type="project" value="UniProtKB-EC"/>
</dbReference>
<dbReference type="GO" id="GO:0050559">
    <property type="term" value="F:copalyl diphosphate synthase activity"/>
    <property type="evidence" value="ECO:0007669"/>
    <property type="project" value="UniProtKB-EC"/>
</dbReference>
<dbReference type="GO" id="GO:0052678">
    <property type="term" value="F:levopimaradiene synthase activity"/>
    <property type="evidence" value="ECO:0007669"/>
    <property type="project" value="UniProtKB-EC"/>
</dbReference>
<dbReference type="GO" id="GO:0000287">
    <property type="term" value="F:magnesium ion binding"/>
    <property type="evidence" value="ECO:0007669"/>
    <property type="project" value="InterPro"/>
</dbReference>
<dbReference type="GO" id="GO:0010333">
    <property type="term" value="F:terpene synthase activity"/>
    <property type="evidence" value="ECO:0007669"/>
    <property type="project" value="InterPro"/>
</dbReference>
<dbReference type="GO" id="GO:0006952">
    <property type="term" value="P:defense response"/>
    <property type="evidence" value="ECO:0007669"/>
    <property type="project" value="UniProtKB-KW"/>
</dbReference>
<dbReference type="GO" id="GO:0016102">
    <property type="term" value="P:diterpenoid biosynthetic process"/>
    <property type="evidence" value="ECO:0007669"/>
    <property type="project" value="InterPro"/>
</dbReference>
<dbReference type="CDD" id="cd00684">
    <property type="entry name" value="Terpene_cyclase_plant_C1"/>
    <property type="match status" value="1"/>
</dbReference>
<dbReference type="FunFam" id="1.50.10.130:FF:000002">
    <property type="entry name" value="Ent-copalyl diphosphate synthase, chloroplastic"/>
    <property type="match status" value="1"/>
</dbReference>
<dbReference type="FunFam" id="1.10.600.10:FF:000005">
    <property type="entry name" value="Ent-kaur-16-ene synthase, chloroplastic"/>
    <property type="match status" value="1"/>
</dbReference>
<dbReference type="Gene3D" id="1.50.10.160">
    <property type="match status" value="1"/>
</dbReference>
<dbReference type="Gene3D" id="1.10.600.10">
    <property type="entry name" value="Farnesyl Diphosphate Synthase"/>
    <property type="match status" value="1"/>
</dbReference>
<dbReference type="Gene3D" id="1.50.10.130">
    <property type="entry name" value="Terpene synthase, N-terminal domain"/>
    <property type="match status" value="1"/>
</dbReference>
<dbReference type="InterPro" id="IPR008949">
    <property type="entry name" value="Isoprenoid_synthase_dom_sf"/>
</dbReference>
<dbReference type="InterPro" id="IPR034741">
    <property type="entry name" value="Terpene_cyclase-like_1_C"/>
</dbReference>
<dbReference type="InterPro" id="IPR044814">
    <property type="entry name" value="Terpene_cyclase_plant_C1"/>
</dbReference>
<dbReference type="InterPro" id="IPR001906">
    <property type="entry name" value="Terpene_synth_N"/>
</dbReference>
<dbReference type="InterPro" id="IPR036965">
    <property type="entry name" value="Terpene_synth_N_sf"/>
</dbReference>
<dbReference type="InterPro" id="IPR050148">
    <property type="entry name" value="Terpene_synthase-like"/>
</dbReference>
<dbReference type="InterPro" id="IPR005630">
    <property type="entry name" value="Terpene_synthase_metal-bd"/>
</dbReference>
<dbReference type="InterPro" id="IPR008930">
    <property type="entry name" value="Terpenoid_cyclase/PrenylTrfase"/>
</dbReference>
<dbReference type="PANTHER" id="PTHR31739:SF25">
    <property type="entry name" value="(E,E)-GERANYLLINALOOL SYNTHASE"/>
    <property type="match status" value="1"/>
</dbReference>
<dbReference type="PANTHER" id="PTHR31739">
    <property type="entry name" value="ENT-COPALYL DIPHOSPHATE SYNTHASE, CHLOROPLASTIC"/>
    <property type="match status" value="1"/>
</dbReference>
<dbReference type="Pfam" id="PF01397">
    <property type="entry name" value="Terpene_synth"/>
    <property type="match status" value="1"/>
</dbReference>
<dbReference type="Pfam" id="PF03936">
    <property type="entry name" value="Terpene_synth_C"/>
    <property type="match status" value="1"/>
</dbReference>
<dbReference type="SFLD" id="SFLDS00005">
    <property type="entry name" value="Isoprenoid_Synthase_Type_I"/>
    <property type="match status" value="1"/>
</dbReference>
<dbReference type="SFLD" id="SFLDG01019">
    <property type="entry name" value="Terpene_Cyclase_Like_1_C_Termi"/>
    <property type="match status" value="1"/>
</dbReference>
<dbReference type="SFLD" id="SFLDG01014">
    <property type="entry name" value="Terpene_Cyclase_Like_1_N-term"/>
    <property type="match status" value="1"/>
</dbReference>
<dbReference type="SFLD" id="SFLDG01605">
    <property type="entry name" value="Terpene_Cyclase_Like_1_N-term"/>
    <property type="match status" value="1"/>
</dbReference>
<dbReference type="SUPFAM" id="SSF48239">
    <property type="entry name" value="Terpenoid cyclases/Protein prenyltransferases"/>
    <property type="match status" value="2"/>
</dbReference>
<dbReference type="SUPFAM" id="SSF48576">
    <property type="entry name" value="Terpenoid synthases"/>
    <property type="match status" value="1"/>
</dbReference>
<feature type="transit peptide" description="Chloroplast" evidence="4">
    <location>
        <begin position="1"/>
        <end position="33"/>
    </location>
</feature>
<feature type="chain" id="PRO_0000431416" description="Bifunctional levopimaradiene synthase, chloroplastic">
    <location>
        <begin position="34"/>
        <end position="857"/>
    </location>
</feature>
<feature type="short sequence motif" description="DXDD motif" evidence="7">
    <location>
        <begin position="390"/>
        <end position="393"/>
    </location>
</feature>
<feature type="short sequence motif" description="DDXXD motif" evidence="7">
    <location>
        <begin position="609"/>
        <end position="613"/>
    </location>
</feature>
<feature type="binding site" evidence="2">
    <location>
        <position position="257"/>
    </location>
    <ligand>
        <name>substrate</name>
    </ligand>
</feature>
<feature type="binding site" evidence="1">
    <location>
        <position position="390"/>
    </location>
    <ligand>
        <name>Mg(2+)</name>
        <dbReference type="ChEBI" id="CHEBI:18420"/>
        <label>4</label>
    </ligand>
</feature>
<feature type="binding site" evidence="1">
    <location>
        <position position="392"/>
    </location>
    <ligand>
        <name>Mg(2+)</name>
        <dbReference type="ChEBI" id="CHEBI:18420"/>
        <label>4</label>
    </ligand>
</feature>
<feature type="binding site" evidence="2">
    <location>
        <position position="477"/>
    </location>
    <ligand>
        <name>substrate</name>
    </ligand>
</feature>
<feature type="binding site" evidence="3">
    <location>
        <position position="609"/>
    </location>
    <ligand>
        <name>Mg(2+)</name>
        <dbReference type="ChEBI" id="CHEBI:18420"/>
        <label>1</label>
    </ligand>
</feature>
<feature type="binding site" evidence="3">
    <location>
        <position position="609"/>
    </location>
    <ligand>
        <name>Mg(2+)</name>
        <dbReference type="ChEBI" id="CHEBI:18420"/>
        <label>2</label>
    </ligand>
</feature>
<feature type="binding site" evidence="3">
    <location>
        <position position="613"/>
    </location>
    <ligand>
        <name>Mg(2+)</name>
        <dbReference type="ChEBI" id="CHEBI:18420"/>
        <label>1</label>
    </ligand>
</feature>
<feature type="binding site" evidence="3">
    <location>
        <position position="613"/>
    </location>
    <ligand>
        <name>Mg(2+)</name>
        <dbReference type="ChEBI" id="CHEBI:18420"/>
        <label>2</label>
    </ligand>
</feature>
<feature type="binding site" evidence="3">
    <location>
        <position position="753"/>
    </location>
    <ligand>
        <name>Mg(2+)</name>
        <dbReference type="ChEBI" id="CHEBI:18420"/>
        <label>3</label>
    </ligand>
</feature>
<feature type="binding site" evidence="3">
    <location>
        <position position="757"/>
    </location>
    <ligand>
        <name>Mg(2+)</name>
        <dbReference type="ChEBI" id="CHEBI:18420"/>
        <label>3</label>
    </ligand>
</feature>
<feature type="binding site" evidence="3">
    <location>
        <position position="761"/>
    </location>
    <ligand>
        <name>Mg(2+)</name>
        <dbReference type="ChEBI" id="CHEBI:18420"/>
        <label>3</label>
    </ligand>
</feature>
<comment type="function">
    <text evidence="5">Involved in defensive oleoresin formation in conifers in response to insect attack or other injury. Involved in diterpene (C20) olefins biosynthesis. Bifunctional enzyme that catalyzes two sequential cyclizations of geranylgeranyl diphosphate (GGPP) to levopimaradiene. Levopimaradiene is the major products of the enzyme with abietadiene and neoabietadiene. No activity with farnesyl diphosphate (FPP) as substrate.</text>
</comment>
<comment type="catalytic activity">
    <reaction evidence="5">
        <text>(2E,6E,10E)-geranylgeranyl diphosphate = (+)-copalyl diphosphate</text>
        <dbReference type="Rhea" id="RHEA:24316"/>
        <dbReference type="ChEBI" id="CHEBI:58635"/>
        <dbReference type="ChEBI" id="CHEBI:58756"/>
        <dbReference type="EC" id="5.5.1.12"/>
    </reaction>
</comment>
<comment type="catalytic activity">
    <reaction evidence="5">
        <text>(+)-copalyl diphosphate = abieta-7,13-diene + diphosphate</text>
        <dbReference type="Rhea" id="RHEA:13873"/>
        <dbReference type="ChEBI" id="CHEBI:30232"/>
        <dbReference type="ChEBI" id="CHEBI:33019"/>
        <dbReference type="ChEBI" id="CHEBI:58635"/>
        <dbReference type="EC" id="4.2.3.18"/>
    </reaction>
</comment>
<comment type="catalytic activity">
    <reaction evidence="5">
        <text>(+)-copalyl diphosphate = abieta-8(14),12-diene + diphosphate</text>
        <dbReference type="Rhea" id="RHEA:25548"/>
        <dbReference type="ChEBI" id="CHEBI:29616"/>
        <dbReference type="ChEBI" id="CHEBI:33019"/>
        <dbReference type="ChEBI" id="CHEBI:58635"/>
        <dbReference type="EC" id="4.2.3.32"/>
    </reaction>
</comment>
<comment type="catalytic activity">
    <reaction evidence="5">
        <text>(+)-copalyl diphosphate = neoabietadiene + diphosphate</text>
        <dbReference type="Rhea" id="RHEA:33987"/>
        <dbReference type="ChEBI" id="CHEBI:29651"/>
        <dbReference type="ChEBI" id="CHEBI:33019"/>
        <dbReference type="ChEBI" id="CHEBI:58635"/>
        <dbReference type="EC" id="4.2.3.132"/>
    </reaction>
</comment>
<comment type="cofactor">
    <cofactor evidence="3">
        <name>Mg(2+)</name>
        <dbReference type="ChEBI" id="CHEBI:18420"/>
    </cofactor>
    <text evidence="3">Binds 3 Mg(2+) ions per subunit.</text>
</comment>
<comment type="pathway">
    <text evidence="7">Terpene metabolism; oleoresin biosynthesis.</text>
</comment>
<comment type="subcellular location">
    <subcellularLocation>
        <location evidence="4">Plastid</location>
        <location evidence="4">Chloroplast</location>
    </subcellularLocation>
</comment>
<comment type="domain">
    <text evidence="7">The Asp-Xaa-Asp-Asp (DXDD) motif is important for the catalytic activity in the class II active site relevant for the cyclization of GGPP. The Asp-Asp-Xaa-Xaa-Asp/Glu (DDXXD/E) motif is important for the catalytic activity in the class I active site, presumably through binding to Mg(2+).</text>
</comment>
<comment type="similarity">
    <text evidence="7">Belongs to the terpene synthase family. Tpsd subfamily.</text>
</comment>
<reference key="1">
    <citation type="journal article" date="2013" name="Plant Physiol.">
        <title>Evolution of conifer diterpene synthases: diterpene resin acid biosynthesis in lodgepole pine and jack pine involves monofunctional and bifunctional diterpene synthases.</title>
        <authorList>
            <person name="Hall D.E."/>
            <person name="Zerbe P."/>
            <person name="Jancsik S."/>
            <person name="Quesada A.L."/>
            <person name="Dullat H."/>
            <person name="Madilao L.L."/>
            <person name="Yuen M."/>
            <person name="Bohlmann J."/>
        </authorList>
    </citation>
    <scope>NUCLEOTIDE SEQUENCE [MRNA]</scope>
    <scope>FUNCTION</scope>
    <scope>CATALYTIC ACTIVITY</scope>
    <scope>3D-STRUCTURE MODELING</scope>
</reference>
<evidence type="ECO:0000250" key="1">
    <source>
        <dbReference type="UniProtKB" id="C7BKP9"/>
    </source>
</evidence>
<evidence type="ECO:0000250" key="2">
    <source>
        <dbReference type="UniProtKB" id="Q38802"/>
    </source>
</evidence>
<evidence type="ECO:0000250" key="3">
    <source>
        <dbReference type="UniProtKB" id="Q40577"/>
    </source>
</evidence>
<evidence type="ECO:0000255" key="4"/>
<evidence type="ECO:0000269" key="5">
    <source>
    </source>
</evidence>
<evidence type="ECO:0000303" key="6">
    <source>
    </source>
</evidence>
<evidence type="ECO:0000305" key="7"/>
<evidence type="ECO:0000312" key="8">
    <source>
        <dbReference type="EMBL" id="AFU73862.1"/>
    </source>
</evidence>
<keyword id="KW-0150">Chloroplast</keyword>
<keyword id="KW-0413">Isomerase</keyword>
<keyword id="KW-0456">Lyase</keyword>
<keyword id="KW-0460">Magnesium</keyword>
<keyword id="KW-0479">Metal-binding</keyword>
<keyword id="KW-0511">Multifunctional enzyme</keyword>
<keyword id="KW-0611">Plant defense</keyword>
<keyword id="KW-0934">Plastid</keyword>
<keyword id="KW-0809">Transit peptide</keyword>
<proteinExistence type="evidence at protein level"/>